<protein>
    <recommendedName>
        <fullName>Beta-glucosidase 8</fullName>
        <shortName>Os3bglu8</shortName>
        <ecNumber evidence="6">3.2.1.21</ecNumber>
    </recommendedName>
</protein>
<name>BGL08_ORYSJ</name>
<reference key="1">
    <citation type="journal article" date="2005" name="Genome Res.">
        <title>Sequence, annotation, and analysis of synteny between rice chromosome 3 and diverged grass species.</title>
        <authorList>
            <consortium name="The rice chromosome 3 sequencing consortium"/>
            <person name="Buell C.R."/>
            <person name="Yuan Q."/>
            <person name="Ouyang S."/>
            <person name="Liu J."/>
            <person name="Zhu W."/>
            <person name="Wang A."/>
            <person name="Maiti R."/>
            <person name="Haas B."/>
            <person name="Wortman J."/>
            <person name="Pertea M."/>
            <person name="Jones K.M."/>
            <person name="Kim M."/>
            <person name="Overton L."/>
            <person name="Tsitrin T."/>
            <person name="Fadrosh D."/>
            <person name="Bera J."/>
            <person name="Weaver B."/>
            <person name="Jin S."/>
            <person name="Johri S."/>
            <person name="Reardon M."/>
            <person name="Webb K."/>
            <person name="Hill J."/>
            <person name="Moffat K."/>
            <person name="Tallon L."/>
            <person name="Van Aken S."/>
            <person name="Lewis M."/>
            <person name="Utterback T."/>
            <person name="Feldblyum T."/>
            <person name="Zismann V."/>
            <person name="Iobst S."/>
            <person name="Hsiao J."/>
            <person name="de Vazeille A.R."/>
            <person name="Salzberg S.L."/>
            <person name="White O."/>
            <person name="Fraser C.M."/>
            <person name="Yu Y."/>
            <person name="Kim H."/>
            <person name="Rambo T."/>
            <person name="Currie J."/>
            <person name="Collura K."/>
            <person name="Kernodle-Thompson S."/>
            <person name="Wei F."/>
            <person name="Kudrna K."/>
            <person name="Ammiraju J.S.S."/>
            <person name="Luo M."/>
            <person name="Goicoechea J.L."/>
            <person name="Wing R.A."/>
            <person name="Henry D."/>
            <person name="Oates R."/>
            <person name="Palmer M."/>
            <person name="Pries G."/>
            <person name="Saski C."/>
            <person name="Simmons J."/>
            <person name="Soderlund C."/>
            <person name="Nelson W."/>
            <person name="de la Bastide M."/>
            <person name="Spiegel L."/>
            <person name="Nascimento L."/>
            <person name="Huang E."/>
            <person name="Preston R."/>
            <person name="Zutavern T."/>
            <person name="Palmer L."/>
            <person name="O'Shaughnessy A."/>
            <person name="Dike S."/>
            <person name="McCombie W.R."/>
            <person name="Minx P."/>
            <person name="Cordum H."/>
            <person name="Wilson R."/>
            <person name="Jin W."/>
            <person name="Lee H.R."/>
            <person name="Jiang J."/>
            <person name="Jackson S."/>
        </authorList>
    </citation>
    <scope>NUCLEOTIDE SEQUENCE [LARGE SCALE GENOMIC DNA]</scope>
    <source>
        <strain>cv. Nipponbare</strain>
    </source>
</reference>
<reference key="2">
    <citation type="journal article" date="2005" name="Nature">
        <title>The map-based sequence of the rice genome.</title>
        <authorList>
            <consortium name="International rice genome sequencing project (IRGSP)"/>
        </authorList>
    </citation>
    <scope>NUCLEOTIDE SEQUENCE [LARGE SCALE GENOMIC DNA]</scope>
    <source>
        <strain>cv. Nipponbare</strain>
    </source>
</reference>
<reference key="3">
    <citation type="journal article" date="2008" name="Nucleic Acids Res.">
        <title>The rice annotation project database (RAP-DB): 2008 update.</title>
        <authorList>
            <consortium name="The rice annotation project (RAP)"/>
        </authorList>
    </citation>
    <scope>GENOME REANNOTATION</scope>
    <source>
        <strain>cv. Nipponbare</strain>
    </source>
</reference>
<reference key="4">
    <citation type="journal article" date="2013" name="Rice">
        <title>Improvement of the Oryza sativa Nipponbare reference genome using next generation sequence and optical map data.</title>
        <authorList>
            <person name="Kawahara Y."/>
            <person name="de la Bastide M."/>
            <person name="Hamilton J.P."/>
            <person name="Kanamori H."/>
            <person name="McCombie W.R."/>
            <person name="Ouyang S."/>
            <person name="Schwartz D.C."/>
            <person name="Tanaka T."/>
            <person name="Wu J."/>
            <person name="Zhou S."/>
            <person name="Childs K.L."/>
            <person name="Davidson R.M."/>
            <person name="Lin H."/>
            <person name="Quesada-Ocampo L."/>
            <person name="Vaillancourt B."/>
            <person name="Sakai H."/>
            <person name="Lee S.S."/>
            <person name="Kim J."/>
            <person name="Numa H."/>
            <person name="Itoh T."/>
            <person name="Buell C.R."/>
            <person name="Matsumoto T."/>
        </authorList>
    </citation>
    <scope>GENOME REANNOTATION</scope>
    <source>
        <strain>cv. Nipponbare</strain>
    </source>
</reference>
<reference key="5">
    <citation type="journal article" date="2005" name="PLoS Biol.">
        <title>The genomes of Oryza sativa: a history of duplications.</title>
        <authorList>
            <person name="Yu J."/>
            <person name="Wang J."/>
            <person name="Lin W."/>
            <person name="Li S."/>
            <person name="Li H."/>
            <person name="Zhou J."/>
            <person name="Ni P."/>
            <person name="Dong W."/>
            <person name="Hu S."/>
            <person name="Zeng C."/>
            <person name="Zhang J."/>
            <person name="Zhang Y."/>
            <person name="Li R."/>
            <person name="Xu Z."/>
            <person name="Li S."/>
            <person name="Li X."/>
            <person name="Zheng H."/>
            <person name="Cong L."/>
            <person name="Lin L."/>
            <person name="Yin J."/>
            <person name="Geng J."/>
            <person name="Li G."/>
            <person name="Shi J."/>
            <person name="Liu J."/>
            <person name="Lv H."/>
            <person name="Li J."/>
            <person name="Wang J."/>
            <person name="Deng Y."/>
            <person name="Ran L."/>
            <person name="Shi X."/>
            <person name="Wang X."/>
            <person name="Wu Q."/>
            <person name="Li C."/>
            <person name="Ren X."/>
            <person name="Wang J."/>
            <person name="Wang X."/>
            <person name="Li D."/>
            <person name="Liu D."/>
            <person name="Zhang X."/>
            <person name="Ji Z."/>
            <person name="Zhao W."/>
            <person name="Sun Y."/>
            <person name="Zhang Z."/>
            <person name="Bao J."/>
            <person name="Han Y."/>
            <person name="Dong L."/>
            <person name="Ji J."/>
            <person name="Chen P."/>
            <person name="Wu S."/>
            <person name="Liu J."/>
            <person name="Xiao Y."/>
            <person name="Bu D."/>
            <person name="Tan J."/>
            <person name="Yang L."/>
            <person name="Ye C."/>
            <person name="Zhang J."/>
            <person name="Xu J."/>
            <person name="Zhou Y."/>
            <person name="Yu Y."/>
            <person name="Zhang B."/>
            <person name="Zhuang S."/>
            <person name="Wei H."/>
            <person name="Liu B."/>
            <person name="Lei M."/>
            <person name="Yu H."/>
            <person name="Li Y."/>
            <person name="Xu H."/>
            <person name="Wei S."/>
            <person name="He X."/>
            <person name="Fang L."/>
            <person name="Zhang Z."/>
            <person name="Zhang Y."/>
            <person name="Huang X."/>
            <person name="Su Z."/>
            <person name="Tong W."/>
            <person name="Li J."/>
            <person name="Tong Z."/>
            <person name="Li S."/>
            <person name="Ye J."/>
            <person name="Wang L."/>
            <person name="Fang L."/>
            <person name="Lei T."/>
            <person name="Chen C.-S."/>
            <person name="Chen H.-C."/>
            <person name="Xu Z."/>
            <person name="Li H."/>
            <person name="Huang H."/>
            <person name="Zhang F."/>
            <person name="Xu H."/>
            <person name="Li N."/>
            <person name="Zhao C."/>
            <person name="Li S."/>
            <person name="Dong L."/>
            <person name="Huang Y."/>
            <person name="Li L."/>
            <person name="Xi Y."/>
            <person name="Qi Q."/>
            <person name="Li W."/>
            <person name="Zhang B."/>
            <person name="Hu W."/>
            <person name="Zhang Y."/>
            <person name="Tian X."/>
            <person name="Jiao Y."/>
            <person name="Liang X."/>
            <person name="Jin J."/>
            <person name="Gao L."/>
            <person name="Zheng W."/>
            <person name="Hao B."/>
            <person name="Liu S.-M."/>
            <person name="Wang W."/>
            <person name="Yuan L."/>
            <person name="Cao M."/>
            <person name="McDermott J."/>
            <person name="Samudrala R."/>
            <person name="Wang J."/>
            <person name="Wong G.K.-S."/>
            <person name="Yang H."/>
        </authorList>
    </citation>
    <scope>NUCLEOTIDE SEQUENCE [LARGE SCALE GENOMIC DNA]</scope>
    <source>
        <strain>cv. Nipponbare</strain>
    </source>
</reference>
<reference key="6">
    <citation type="journal article" date="2003" name="Science">
        <title>Collection, mapping, and annotation of over 28,000 cDNA clones from japonica rice.</title>
        <authorList>
            <consortium name="The rice full-length cDNA consortium"/>
        </authorList>
    </citation>
    <scope>NUCLEOTIDE SEQUENCE [LARGE SCALE MRNA]</scope>
    <source>
        <strain>cv. Nipponbare</strain>
    </source>
</reference>
<reference key="7">
    <citation type="journal article" date="2006" name="BMC Plant Biol.">
        <title>Analysis of rice glycosyl hydrolase family 1 and expression of Os4bglu12 beta-glucosidase.</title>
        <authorList>
            <person name="Opassiri R."/>
            <person name="Pomthong B."/>
            <person name="Onkoksoong T."/>
            <person name="Akiyama T."/>
            <person name="Esen A."/>
            <person name="Ketudat Cairns J.R."/>
        </authorList>
    </citation>
    <scope>GENE FAMILY</scope>
    <scope>NOMENCLATURE</scope>
</reference>
<reference key="8">
    <citation type="journal article" date="2009" name="Arch. Biochem. Biophys.">
        <title>Rice family GH1 glycoside hydrolases with beta-D-glucosidase and beta-D-mannosidase activities.</title>
        <authorList>
            <person name="Kuntothom T."/>
            <person name="Luang S."/>
            <person name="Harvey A.J."/>
            <person name="Fincher G.B."/>
            <person name="Opassiri R."/>
            <person name="Hrmova M."/>
            <person name="Ketudat Cairns J.R."/>
        </authorList>
    </citation>
    <scope>FUNCTION</scope>
    <scope>BIOPHYSICOCHEMICAL PROPERTIES</scope>
    <scope>CATALYTIC ACTIVITY</scope>
</reference>
<comment type="function">
    <text evidence="6">Hydrolyzes p-nitrophenyl beta-D-glucoside, p-nitrophenyl beta-D-mannoside, p-nitrophenyl beta-D-galactoside, p-nitrophenyl beta-D-xyloside, p-nitrophenyl beta-D-fucoside, p-nitrophenyl beta-L-arabinoside, cello-oligosaccharides, laminari-oligosaccharides, sophorose and gentiobiose.</text>
</comment>
<comment type="catalytic activity">
    <reaction evidence="6">
        <text>Hydrolysis of terminal, non-reducing beta-D-glucosyl residues with release of beta-D-glucose.</text>
        <dbReference type="EC" id="3.2.1.21"/>
    </reaction>
</comment>
<comment type="biophysicochemical properties">
    <kinetics>
        <KM evidence="6">0.27 mM for p-nitrophenyl beta-D-glucoside (at pH 5.0)</KM>
        <KM evidence="6">1.6 mM for p-nitrophenyl beta-D-mannoside (at pH 5.0)</KM>
        <KM evidence="6">26 mM for cellobiose (at pH 5.0)</KM>
        <KM evidence="6">0.56 mM for cellotriose (at pH 5.0)</KM>
        <KM evidence="6">0.25 mM for cellotetraose (at pH 5.0)</KM>
        <KM evidence="6">0.15 mM for cellopentaose (at pH 5.0)</KM>
        <KM evidence="6">0.12 mM for cellohexaose (at pH 5.0)</KM>
        <KM evidence="6">0.32 mM for laminaribiose (at pH 5.0)</KM>
        <KM evidence="6">6 mM for laminaritriose (at pH 5.0)</KM>
    </kinetics>
</comment>
<comment type="similarity">
    <text evidence="7">Belongs to the glycosyl hydrolase 1 family.</text>
</comment>
<comment type="sequence caution" evidence="7">
    <conflict type="erroneous gene model prediction">
        <sequence resource="EMBL-CDS" id="AAX95520"/>
    </conflict>
</comment>
<feature type="signal peptide" evidence="4">
    <location>
        <begin position="1"/>
        <end position="33"/>
    </location>
</feature>
<feature type="chain" id="PRO_0000390325" description="Beta-glucosidase 8">
    <location>
        <begin position="34"/>
        <end position="568"/>
    </location>
</feature>
<feature type="active site" description="Proton donor" evidence="2">
    <location>
        <position position="211"/>
    </location>
</feature>
<feature type="active site" description="Nucleophile" evidence="2">
    <location>
        <position position="421"/>
    </location>
</feature>
<feature type="binding site" evidence="2">
    <location>
        <position position="64"/>
    </location>
    <ligand>
        <name>a beta-D-glucoside</name>
        <dbReference type="ChEBI" id="CHEBI:22798"/>
    </ligand>
</feature>
<feature type="binding site" evidence="2">
    <location>
        <position position="165"/>
    </location>
    <ligand>
        <name>a beta-D-glucoside</name>
        <dbReference type="ChEBI" id="CHEBI:22798"/>
    </ligand>
</feature>
<feature type="binding site" evidence="2">
    <location>
        <begin position="210"/>
        <end position="211"/>
    </location>
    <ligand>
        <name>a beta-D-glucoside</name>
        <dbReference type="ChEBI" id="CHEBI:22798"/>
    </ligand>
</feature>
<feature type="binding site" evidence="2">
    <location>
        <position position="350"/>
    </location>
    <ligand>
        <name>a beta-D-glucoside</name>
        <dbReference type="ChEBI" id="CHEBI:22798"/>
    </ligand>
</feature>
<feature type="binding site" evidence="3">
    <location>
        <position position="421"/>
    </location>
    <ligand>
        <name>a beta-D-glucoside</name>
        <dbReference type="ChEBI" id="CHEBI:22798"/>
    </ligand>
</feature>
<feature type="binding site" evidence="2">
    <location>
        <position position="468"/>
    </location>
    <ligand>
        <name>a beta-D-glucoside</name>
        <dbReference type="ChEBI" id="CHEBI:22798"/>
    </ligand>
</feature>
<feature type="binding site" evidence="2">
    <location>
        <begin position="475"/>
        <end position="476"/>
    </location>
    <ligand>
        <name>a beta-D-glucoside</name>
        <dbReference type="ChEBI" id="CHEBI:22798"/>
    </ligand>
</feature>
<feature type="binding site" evidence="1">
    <location>
        <position position="484"/>
    </location>
    <ligand>
        <name>a beta-D-glucoside</name>
        <dbReference type="ChEBI" id="CHEBI:22798"/>
    </ligand>
</feature>
<feature type="glycosylation site" description="N-linked (GlcNAc...) asparagine" evidence="5">
    <location>
        <position position="287"/>
    </location>
</feature>
<feature type="glycosylation site" description="N-linked (GlcNAc...) asparagine" evidence="5">
    <location>
        <position position="429"/>
    </location>
</feature>
<feature type="disulfide bond" evidence="2">
    <location>
        <begin position="230"/>
        <end position="233"/>
    </location>
</feature>
<accession>Q75I94</accession>
<accession>A0A0P0W1Y4</accession>
<accession>Q53RI4</accession>
<keyword id="KW-1015">Disulfide bond</keyword>
<keyword id="KW-0325">Glycoprotein</keyword>
<keyword id="KW-0326">Glycosidase</keyword>
<keyword id="KW-0378">Hydrolase</keyword>
<keyword id="KW-1185">Reference proteome</keyword>
<keyword id="KW-0732">Signal</keyword>
<sequence>MGCAPAAHYLPGGGWRRLLVVVVALVVLDRAGARVRAADDDTGGLSRAAFPKGFVFGTATSAFQVEGMAASGGRGPSIWDPFVHTPGNIAGNGNADVTTDEYHRYKEDVDLLKSLNFDAYRFSISWSRIFPDGEGKVNTEGVAYYNNLIDYVIKQGLIPYVNLNHYDLPLALQKKYEGWLSPKIVGVFSDYAEFCFKTYGDRVKNWFTFNEPRIVAALGHDTGTDPPNRCTKCAAGGNSATEPYIVAHNIILSHATAVDRYRNKFQASQKGKIGIVLDFNWYEPLTNSTEDQAAAQRARDFHVGWFLDPLINGQYPKNMRDIVKERLPTFTPEQAKLVKGSADYFGINQYTANYMADQPAPQQAATSYSSDWHVSFIFQRNGVPIGQQANSNWLYIVPTGMYGAVNYIKEKYNNPTIIISENGMDQSGNLTREEFLHDTERIEFYKNYLTELKKAIDDGANVVAYFAWSLLDNFEWLSGYTSKFGIVYVDFTTLKRYPKDSANWFKNMLQASGPGSKSGSGTSDSQVGSATSASHPVGSAISSSHRLLLPLLVSLHFLFPSFFMFLSL</sequence>
<proteinExistence type="evidence at protein level"/>
<organism>
    <name type="scientific">Oryza sativa subsp. japonica</name>
    <name type="common">Rice</name>
    <dbReference type="NCBI Taxonomy" id="39947"/>
    <lineage>
        <taxon>Eukaryota</taxon>
        <taxon>Viridiplantae</taxon>
        <taxon>Streptophyta</taxon>
        <taxon>Embryophyta</taxon>
        <taxon>Tracheophyta</taxon>
        <taxon>Spermatophyta</taxon>
        <taxon>Magnoliopsida</taxon>
        <taxon>Liliopsida</taxon>
        <taxon>Poales</taxon>
        <taxon>Poaceae</taxon>
        <taxon>BOP clade</taxon>
        <taxon>Oryzoideae</taxon>
        <taxon>Oryzeae</taxon>
        <taxon>Oryzinae</taxon>
        <taxon>Oryza</taxon>
        <taxon>Oryza sativa</taxon>
    </lineage>
</organism>
<evidence type="ECO:0000250" key="1">
    <source>
        <dbReference type="UniProtKB" id="Q1XH05"/>
    </source>
</evidence>
<evidence type="ECO:0000250" key="2">
    <source>
        <dbReference type="UniProtKB" id="Q7XSK0"/>
    </source>
</evidence>
<evidence type="ECO:0000250" key="3">
    <source>
        <dbReference type="UniProtKB" id="Q9SPP9"/>
    </source>
</evidence>
<evidence type="ECO:0000255" key="4"/>
<evidence type="ECO:0000255" key="5">
    <source>
        <dbReference type="PROSITE-ProRule" id="PRU00498"/>
    </source>
</evidence>
<evidence type="ECO:0000269" key="6">
    <source>
    </source>
</evidence>
<evidence type="ECO:0000305" key="7"/>
<dbReference type="EC" id="3.2.1.21" evidence="6"/>
<dbReference type="EMBL" id="AC091670">
    <property type="protein sequence ID" value="AAX95520.1"/>
    <property type="status" value="ALT_SEQ"/>
    <property type="molecule type" value="Genomic_DNA"/>
</dbReference>
<dbReference type="EMBL" id="AC133334">
    <property type="protein sequence ID" value="AAS07251.1"/>
    <property type="molecule type" value="Genomic_DNA"/>
</dbReference>
<dbReference type="EMBL" id="DP000009">
    <property type="protein sequence ID" value="ABF98427.1"/>
    <property type="molecule type" value="Genomic_DNA"/>
</dbReference>
<dbReference type="EMBL" id="AP008209">
    <property type="protein sequence ID" value="BAF12928.1"/>
    <property type="molecule type" value="Genomic_DNA"/>
</dbReference>
<dbReference type="EMBL" id="AP014959">
    <property type="protein sequence ID" value="BAS85955.1"/>
    <property type="molecule type" value="Genomic_DNA"/>
</dbReference>
<dbReference type="EMBL" id="CM000140">
    <property type="protein sequence ID" value="EEE59768.1"/>
    <property type="molecule type" value="Genomic_DNA"/>
</dbReference>
<dbReference type="EMBL" id="AK120790">
    <property type="protein sequence ID" value="BAH00173.1"/>
    <property type="molecule type" value="mRNA"/>
</dbReference>
<dbReference type="RefSeq" id="XP_015630330.1">
    <property type="nucleotide sequence ID" value="XM_015774844.1"/>
</dbReference>
<dbReference type="SMR" id="Q75I94"/>
<dbReference type="FunCoup" id="Q75I94">
    <property type="interactions" value="483"/>
</dbReference>
<dbReference type="STRING" id="39947.Q75I94"/>
<dbReference type="CAZy" id="GH1">
    <property type="family name" value="Glycoside Hydrolase Family 1"/>
</dbReference>
<dbReference type="GlyCosmos" id="Q75I94">
    <property type="glycosylation" value="2 sites, No reported glycans"/>
</dbReference>
<dbReference type="PaxDb" id="39947-Q75I94"/>
<dbReference type="EnsemblPlants" id="Os03t0703100-01">
    <property type="protein sequence ID" value="Os03t0703100-01"/>
    <property type="gene ID" value="Os03g0703100"/>
</dbReference>
<dbReference type="Gramene" id="Os03t0703100-01">
    <property type="protein sequence ID" value="Os03t0703100-01"/>
    <property type="gene ID" value="Os03g0703100"/>
</dbReference>
<dbReference type="KEGG" id="dosa:Os03g0703100"/>
<dbReference type="eggNOG" id="KOG0626">
    <property type="taxonomic scope" value="Eukaryota"/>
</dbReference>
<dbReference type="HOGENOM" id="CLU_001859_1_0_1"/>
<dbReference type="InParanoid" id="Q75I94"/>
<dbReference type="OMA" id="KWMQWNY"/>
<dbReference type="OrthoDB" id="65569at2759"/>
<dbReference type="SABIO-RK" id="Q75I94"/>
<dbReference type="Proteomes" id="UP000000763">
    <property type="component" value="Chromosome 3"/>
</dbReference>
<dbReference type="Proteomes" id="UP000007752">
    <property type="component" value="Chromosome 3"/>
</dbReference>
<dbReference type="Proteomes" id="UP000059680">
    <property type="component" value="Chromosome 3"/>
</dbReference>
<dbReference type="ExpressionAtlas" id="Q75I94">
    <property type="expression patterns" value="baseline and differential"/>
</dbReference>
<dbReference type="GO" id="GO:0033907">
    <property type="term" value="F:beta-D-fucosidase activity"/>
    <property type="evidence" value="ECO:0000314"/>
    <property type="project" value="UniProtKB"/>
</dbReference>
<dbReference type="GO" id="GO:0004565">
    <property type="term" value="F:beta-galactosidase activity"/>
    <property type="evidence" value="ECO:0000314"/>
    <property type="project" value="UniProtKB"/>
</dbReference>
<dbReference type="GO" id="GO:0080083">
    <property type="term" value="F:beta-gentiobiose beta-glucosidase activity"/>
    <property type="evidence" value="ECO:0000314"/>
    <property type="project" value="UniProtKB"/>
</dbReference>
<dbReference type="GO" id="GO:0008422">
    <property type="term" value="F:beta-glucosidase activity"/>
    <property type="evidence" value="ECO:0000314"/>
    <property type="project" value="UniProtKB"/>
</dbReference>
<dbReference type="GO" id="GO:0047701">
    <property type="term" value="F:beta-L-arabinosidase activity"/>
    <property type="evidence" value="ECO:0000314"/>
    <property type="project" value="UniProtKB"/>
</dbReference>
<dbReference type="GO" id="GO:0004567">
    <property type="term" value="F:beta-mannosidase activity"/>
    <property type="evidence" value="ECO:0000314"/>
    <property type="project" value="UniProtKB"/>
</dbReference>
<dbReference type="GO" id="GO:0080079">
    <property type="term" value="F:cellobiose glucosidase activity"/>
    <property type="evidence" value="ECO:0000314"/>
    <property type="project" value="UniProtKB"/>
</dbReference>
<dbReference type="GO" id="GO:0004338">
    <property type="term" value="F:glucan exo-1,3-beta-glucosidase activity"/>
    <property type="evidence" value="ECO:0000314"/>
    <property type="project" value="UniProtKB"/>
</dbReference>
<dbReference type="GO" id="GO:0005975">
    <property type="term" value="P:carbohydrate metabolic process"/>
    <property type="evidence" value="ECO:0007669"/>
    <property type="project" value="InterPro"/>
</dbReference>
<dbReference type="FunFam" id="3.20.20.80:FF:000041">
    <property type="entry name" value="Beta-glucosidase 7"/>
    <property type="match status" value="1"/>
</dbReference>
<dbReference type="Gene3D" id="3.20.20.80">
    <property type="entry name" value="Glycosidases"/>
    <property type="match status" value="1"/>
</dbReference>
<dbReference type="InterPro" id="IPR001360">
    <property type="entry name" value="Glyco_hydro_1"/>
</dbReference>
<dbReference type="InterPro" id="IPR017853">
    <property type="entry name" value="Glycoside_hydrolase_SF"/>
</dbReference>
<dbReference type="PANTHER" id="PTHR10353:SF69">
    <property type="entry name" value="BETA-GLUCOSIDASE 8"/>
    <property type="match status" value="1"/>
</dbReference>
<dbReference type="PANTHER" id="PTHR10353">
    <property type="entry name" value="GLYCOSYL HYDROLASE"/>
    <property type="match status" value="1"/>
</dbReference>
<dbReference type="Pfam" id="PF00232">
    <property type="entry name" value="Glyco_hydro_1"/>
    <property type="match status" value="1"/>
</dbReference>
<dbReference type="PRINTS" id="PR00131">
    <property type="entry name" value="GLHYDRLASE1"/>
</dbReference>
<dbReference type="SUPFAM" id="SSF51445">
    <property type="entry name" value="(Trans)glycosidases"/>
    <property type="match status" value="1"/>
</dbReference>
<gene>
    <name type="primary">BGLU8</name>
    <name type="ordered locus">Os03g0703100</name>
    <name type="ordered locus">LOC_Os03g49610</name>
    <name type="ORF">OsJ_12263</name>
    <name type="ORF">OSJNBa0004L11.15</name>
</gene>